<feature type="chain" id="PRO_1000145169" description="Urease accessory protein UreG">
    <location>
        <begin position="1"/>
        <end position="208"/>
    </location>
</feature>
<feature type="binding site" evidence="1">
    <location>
        <begin position="14"/>
        <end position="21"/>
    </location>
    <ligand>
        <name>GTP</name>
        <dbReference type="ChEBI" id="CHEBI:37565"/>
    </ligand>
</feature>
<comment type="function">
    <text evidence="1">Facilitates the functional incorporation of the urease nickel metallocenter. This process requires GTP hydrolysis, probably effectuated by UreG.</text>
</comment>
<comment type="subunit">
    <text evidence="1">Homodimer. UreD, UreF and UreG form a complex that acts as a GTP-hydrolysis-dependent molecular chaperone, activating the urease apoprotein by helping to assemble the nickel containing metallocenter of UreC. The UreE protein probably delivers the nickel.</text>
</comment>
<comment type="subcellular location">
    <subcellularLocation>
        <location evidence="1">Cytoplasm</location>
    </subcellularLocation>
</comment>
<comment type="similarity">
    <text evidence="1">Belongs to the SIMIBI class G3E GTPase family. UreG subfamily.</text>
</comment>
<protein>
    <recommendedName>
        <fullName evidence="1">Urease accessory protein UreG</fullName>
    </recommendedName>
</protein>
<keyword id="KW-0143">Chaperone</keyword>
<keyword id="KW-0963">Cytoplasm</keyword>
<keyword id="KW-0342">GTP-binding</keyword>
<keyword id="KW-0996">Nickel insertion</keyword>
<keyword id="KW-0547">Nucleotide-binding</keyword>
<proteinExistence type="inferred from homology"/>
<sequence>MTQKNGPLRVGIGGPVGSGKTTLTEKLCKAMRDKYSVAVITNDIYTQEDALILARRQALSEDRIIGVETGGCPHTAIREDASINLQAVVEMTRRFPDLDVVFIESGGDNLAATFSPDLADLTLYVISVCQGEEIPRKGGPGITRSDFLVINKSDLAPYVHVDLEVMEADAMRMRAKRPFGFTDLHRGKGVQEIIDFIVENGGLEPRSN</sequence>
<evidence type="ECO:0000255" key="1">
    <source>
        <dbReference type="HAMAP-Rule" id="MF_01389"/>
    </source>
</evidence>
<gene>
    <name evidence="1" type="primary">ureG</name>
    <name type="ordered locus">BSUIS_A0296</name>
</gene>
<name>UREG_BRUSI</name>
<organism>
    <name type="scientific">Brucella suis (strain ATCC 23445 / NCTC 10510)</name>
    <dbReference type="NCBI Taxonomy" id="470137"/>
    <lineage>
        <taxon>Bacteria</taxon>
        <taxon>Pseudomonadati</taxon>
        <taxon>Pseudomonadota</taxon>
        <taxon>Alphaproteobacteria</taxon>
        <taxon>Hyphomicrobiales</taxon>
        <taxon>Brucellaceae</taxon>
        <taxon>Brucella/Ochrobactrum group</taxon>
        <taxon>Brucella</taxon>
    </lineage>
</organism>
<reference key="1">
    <citation type="submission" date="2007-12" db="EMBL/GenBank/DDBJ databases">
        <title>Brucella suis ATCC 23445 whole genome shotgun sequencing project.</title>
        <authorList>
            <person name="Setubal J.C."/>
            <person name="Bowns C."/>
            <person name="Boyle S."/>
            <person name="Crasta O.R."/>
            <person name="Czar M.J."/>
            <person name="Dharmanolla C."/>
            <person name="Gillespie J.J."/>
            <person name="Kenyon R.W."/>
            <person name="Lu J."/>
            <person name="Mane S."/>
            <person name="Mohapatra S."/>
            <person name="Nagrani S."/>
            <person name="Purkayastha A."/>
            <person name="Rajasimha H.K."/>
            <person name="Shallom J.M."/>
            <person name="Shallom S."/>
            <person name="Shukla M."/>
            <person name="Snyder E.E."/>
            <person name="Sobral B.W."/>
            <person name="Wattam A.R."/>
            <person name="Will R."/>
            <person name="Williams K."/>
            <person name="Yoo H."/>
            <person name="Bruce D."/>
            <person name="Detter C."/>
            <person name="Munk C."/>
            <person name="Brettin T.S."/>
        </authorList>
    </citation>
    <scope>NUCLEOTIDE SEQUENCE [LARGE SCALE GENOMIC DNA]</scope>
    <source>
        <strain>ATCC 23445 / NCTC 10510</strain>
    </source>
</reference>
<dbReference type="EMBL" id="CP000911">
    <property type="protein sequence ID" value="ABY37391.1"/>
    <property type="molecule type" value="Genomic_DNA"/>
</dbReference>
<dbReference type="RefSeq" id="WP_002963437.1">
    <property type="nucleotide sequence ID" value="NC_010169.1"/>
</dbReference>
<dbReference type="SMR" id="B0CJQ0"/>
<dbReference type="GeneID" id="97534332"/>
<dbReference type="KEGG" id="bmt:BSUIS_A0296"/>
<dbReference type="HOGENOM" id="CLU_072144_1_0_5"/>
<dbReference type="Proteomes" id="UP000008545">
    <property type="component" value="Chromosome I"/>
</dbReference>
<dbReference type="GO" id="GO:0005737">
    <property type="term" value="C:cytoplasm"/>
    <property type="evidence" value="ECO:0007669"/>
    <property type="project" value="UniProtKB-SubCell"/>
</dbReference>
<dbReference type="GO" id="GO:0005525">
    <property type="term" value="F:GTP binding"/>
    <property type="evidence" value="ECO:0007669"/>
    <property type="project" value="UniProtKB-KW"/>
</dbReference>
<dbReference type="GO" id="GO:0003924">
    <property type="term" value="F:GTPase activity"/>
    <property type="evidence" value="ECO:0007669"/>
    <property type="project" value="InterPro"/>
</dbReference>
<dbReference type="GO" id="GO:0016151">
    <property type="term" value="F:nickel cation binding"/>
    <property type="evidence" value="ECO:0007669"/>
    <property type="project" value="UniProtKB-UniRule"/>
</dbReference>
<dbReference type="GO" id="GO:0043419">
    <property type="term" value="P:urea catabolic process"/>
    <property type="evidence" value="ECO:0007669"/>
    <property type="project" value="InterPro"/>
</dbReference>
<dbReference type="CDD" id="cd05540">
    <property type="entry name" value="UreG"/>
    <property type="match status" value="1"/>
</dbReference>
<dbReference type="FunFam" id="3.40.50.300:FF:000208">
    <property type="entry name" value="Urease accessory protein UreG"/>
    <property type="match status" value="1"/>
</dbReference>
<dbReference type="Gene3D" id="3.40.50.300">
    <property type="entry name" value="P-loop containing nucleotide triphosphate hydrolases"/>
    <property type="match status" value="1"/>
</dbReference>
<dbReference type="HAMAP" id="MF_01389">
    <property type="entry name" value="UreG"/>
    <property type="match status" value="1"/>
</dbReference>
<dbReference type="InterPro" id="IPR003495">
    <property type="entry name" value="CobW/HypB/UreG_nucleotide-bd"/>
</dbReference>
<dbReference type="InterPro" id="IPR027417">
    <property type="entry name" value="P-loop_NTPase"/>
</dbReference>
<dbReference type="InterPro" id="IPR004400">
    <property type="entry name" value="UreG"/>
</dbReference>
<dbReference type="NCBIfam" id="TIGR00101">
    <property type="entry name" value="ureG"/>
    <property type="match status" value="1"/>
</dbReference>
<dbReference type="PANTHER" id="PTHR31715">
    <property type="entry name" value="UREASE ACCESSORY PROTEIN G"/>
    <property type="match status" value="1"/>
</dbReference>
<dbReference type="PANTHER" id="PTHR31715:SF0">
    <property type="entry name" value="UREASE ACCESSORY PROTEIN G"/>
    <property type="match status" value="1"/>
</dbReference>
<dbReference type="Pfam" id="PF02492">
    <property type="entry name" value="cobW"/>
    <property type="match status" value="1"/>
</dbReference>
<dbReference type="PIRSF" id="PIRSF005624">
    <property type="entry name" value="Ni-bind_GTPase"/>
    <property type="match status" value="1"/>
</dbReference>
<dbReference type="SUPFAM" id="SSF52540">
    <property type="entry name" value="P-loop containing nucleoside triphosphate hydrolases"/>
    <property type="match status" value="1"/>
</dbReference>
<accession>B0CJQ0</accession>